<comment type="similarity">
    <text evidence="3">Belongs to the class I-like SAM-binding methyltransferase superfamily. RNA M5U methyltransferase family.</text>
</comment>
<dbReference type="EC" id="2.1.1.-"/>
<dbReference type="EMBL" id="BA000034">
    <property type="protein sequence ID" value="BAC63657.1"/>
    <property type="molecule type" value="Genomic_DNA"/>
</dbReference>
<dbReference type="SMR" id="P0DG17"/>
<dbReference type="KEGG" id="sps:SPs0562"/>
<dbReference type="HOGENOM" id="CLU_014689_7_1_9"/>
<dbReference type="GO" id="GO:0051539">
    <property type="term" value="F:4 iron, 4 sulfur cluster binding"/>
    <property type="evidence" value="ECO:0007669"/>
    <property type="project" value="UniProtKB-KW"/>
</dbReference>
<dbReference type="GO" id="GO:0046872">
    <property type="term" value="F:metal ion binding"/>
    <property type="evidence" value="ECO:0007669"/>
    <property type="project" value="UniProtKB-KW"/>
</dbReference>
<dbReference type="GO" id="GO:0070041">
    <property type="term" value="F:rRNA (uridine-C5-)-methyltransferase activity"/>
    <property type="evidence" value="ECO:0007669"/>
    <property type="project" value="TreeGrafter"/>
</dbReference>
<dbReference type="GO" id="GO:0070475">
    <property type="term" value="P:rRNA base methylation"/>
    <property type="evidence" value="ECO:0007669"/>
    <property type="project" value="TreeGrafter"/>
</dbReference>
<dbReference type="CDD" id="cd02440">
    <property type="entry name" value="AdoMet_MTases"/>
    <property type="match status" value="1"/>
</dbReference>
<dbReference type="FunFam" id="3.40.50.150:FF:000009">
    <property type="entry name" value="23S rRNA (Uracil(1939)-C(5))-methyltransferase RlmD"/>
    <property type="match status" value="1"/>
</dbReference>
<dbReference type="FunFam" id="2.40.50.140:FF:000097">
    <property type="entry name" value="23S rRNA (uracil(1939)-C(5))-methyltransferase RlmD"/>
    <property type="match status" value="1"/>
</dbReference>
<dbReference type="FunFam" id="2.40.50.1070:FF:000003">
    <property type="entry name" value="23S rRNA (Uracil-5-)-methyltransferase RumA"/>
    <property type="match status" value="1"/>
</dbReference>
<dbReference type="Gene3D" id="2.40.50.1070">
    <property type="match status" value="1"/>
</dbReference>
<dbReference type="Gene3D" id="2.40.50.140">
    <property type="entry name" value="Nucleic acid-binding proteins"/>
    <property type="match status" value="1"/>
</dbReference>
<dbReference type="Gene3D" id="3.40.50.150">
    <property type="entry name" value="Vaccinia Virus protein VP39"/>
    <property type="match status" value="1"/>
</dbReference>
<dbReference type="InterPro" id="IPR030390">
    <property type="entry name" value="MeTrfase_TrmA_AS"/>
</dbReference>
<dbReference type="InterPro" id="IPR030391">
    <property type="entry name" value="MeTrfase_TrmA_CS"/>
</dbReference>
<dbReference type="InterPro" id="IPR012340">
    <property type="entry name" value="NA-bd_OB-fold"/>
</dbReference>
<dbReference type="InterPro" id="IPR029063">
    <property type="entry name" value="SAM-dependent_MTases_sf"/>
</dbReference>
<dbReference type="InterPro" id="IPR002792">
    <property type="entry name" value="TRAM_dom"/>
</dbReference>
<dbReference type="InterPro" id="IPR010280">
    <property type="entry name" value="U5_MeTrfase_fam"/>
</dbReference>
<dbReference type="NCBIfam" id="TIGR00479">
    <property type="entry name" value="rumA"/>
    <property type="match status" value="1"/>
</dbReference>
<dbReference type="PANTHER" id="PTHR11061:SF45">
    <property type="match status" value="1"/>
</dbReference>
<dbReference type="PANTHER" id="PTHR11061">
    <property type="entry name" value="RNA M5U METHYLTRANSFERASE"/>
    <property type="match status" value="1"/>
</dbReference>
<dbReference type="Pfam" id="PF01938">
    <property type="entry name" value="TRAM"/>
    <property type="match status" value="1"/>
</dbReference>
<dbReference type="Pfam" id="PF05958">
    <property type="entry name" value="tRNA_U5-meth_tr"/>
    <property type="match status" value="1"/>
</dbReference>
<dbReference type="SUPFAM" id="SSF50249">
    <property type="entry name" value="Nucleic acid-binding proteins"/>
    <property type="match status" value="1"/>
</dbReference>
<dbReference type="SUPFAM" id="SSF53335">
    <property type="entry name" value="S-adenosyl-L-methionine-dependent methyltransferases"/>
    <property type="match status" value="1"/>
</dbReference>
<dbReference type="PROSITE" id="PS51687">
    <property type="entry name" value="SAM_MT_RNA_M5U"/>
    <property type="match status" value="1"/>
</dbReference>
<dbReference type="PROSITE" id="PS50926">
    <property type="entry name" value="TRAM"/>
    <property type="match status" value="1"/>
</dbReference>
<dbReference type="PROSITE" id="PS01230">
    <property type="entry name" value="TRMA_1"/>
    <property type="match status" value="1"/>
</dbReference>
<dbReference type="PROSITE" id="PS01231">
    <property type="entry name" value="TRMA_2"/>
    <property type="match status" value="1"/>
</dbReference>
<evidence type="ECO:0000250" key="1"/>
<evidence type="ECO:0000255" key="2">
    <source>
        <dbReference type="PROSITE-ProRule" id="PRU00208"/>
    </source>
</evidence>
<evidence type="ECO:0000255" key="3">
    <source>
        <dbReference type="PROSITE-ProRule" id="PRU01024"/>
    </source>
</evidence>
<gene>
    <name type="ordered locus">SPs0562</name>
</gene>
<organism>
    <name type="scientific">Streptococcus pyogenes serotype M3 (strain SSI-1)</name>
    <dbReference type="NCBI Taxonomy" id="193567"/>
    <lineage>
        <taxon>Bacteria</taxon>
        <taxon>Bacillati</taxon>
        <taxon>Bacillota</taxon>
        <taxon>Bacilli</taxon>
        <taxon>Lactobacillales</taxon>
        <taxon>Streptococcaceae</taxon>
        <taxon>Streptococcus</taxon>
    </lineage>
</organism>
<feature type="chain" id="PRO_0000411598" description="Uncharacterized RNA methyltransferase SPs0562">
    <location>
        <begin position="1"/>
        <end position="451"/>
    </location>
</feature>
<feature type="domain" description="TRAM" evidence="2">
    <location>
        <begin position="2"/>
        <end position="60"/>
    </location>
</feature>
<feature type="active site" description="Nucleophile" evidence="3">
    <location>
        <position position="408"/>
    </location>
</feature>
<feature type="binding site" evidence="1">
    <location>
        <position position="73"/>
    </location>
    <ligand>
        <name>[4Fe-4S] cluster</name>
        <dbReference type="ChEBI" id="CHEBI:49883"/>
    </ligand>
</feature>
<feature type="binding site" evidence="1">
    <location>
        <position position="79"/>
    </location>
    <ligand>
        <name>[4Fe-4S] cluster</name>
        <dbReference type="ChEBI" id="CHEBI:49883"/>
    </ligand>
</feature>
<feature type="binding site" evidence="1">
    <location>
        <position position="82"/>
    </location>
    <ligand>
        <name>[4Fe-4S] cluster</name>
        <dbReference type="ChEBI" id="CHEBI:49883"/>
    </ligand>
</feature>
<feature type="binding site" evidence="1">
    <location>
        <position position="162"/>
    </location>
    <ligand>
        <name>[4Fe-4S] cluster</name>
        <dbReference type="ChEBI" id="CHEBI:49883"/>
    </ligand>
</feature>
<feature type="binding site" evidence="3">
    <location>
        <position position="283"/>
    </location>
    <ligand>
        <name>S-adenosyl-L-methionine</name>
        <dbReference type="ChEBI" id="CHEBI:59789"/>
    </ligand>
</feature>
<feature type="binding site" evidence="3">
    <location>
        <position position="312"/>
    </location>
    <ligand>
        <name>S-adenosyl-L-methionine</name>
        <dbReference type="ChEBI" id="CHEBI:59789"/>
    </ligand>
</feature>
<feature type="binding site" evidence="3">
    <location>
        <position position="333"/>
    </location>
    <ligand>
        <name>S-adenosyl-L-methionine</name>
        <dbReference type="ChEBI" id="CHEBI:59789"/>
    </ligand>
</feature>
<feature type="binding site" evidence="3">
    <location>
        <position position="381"/>
    </location>
    <ligand>
        <name>S-adenosyl-L-methionine</name>
        <dbReference type="ChEBI" id="CHEBI:59789"/>
    </ligand>
</feature>
<reference key="1">
    <citation type="journal article" date="2003" name="Genome Res.">
        <title>Genome sequence of an M3 strain of Streptococcus pyogenes reveals a large-scale genomic rearrangement in invasive strains and new insights into phage evolution.</title>
        <authorList>
            <person name="Nakagawa I."/>
            <person name="Kurokawa K."/>
            <person name="Yamashita A."/>
            <person name="Nakata M."/>
            <person name="Tomiyasu Y."/>
            <person name="Okahashi N."/>
            <person name="Kawabata S."/>
            <person name="Yamazaki K."/>
            <person name="Shiba T."/>
            <person name="Yasunaga T."/>
            <person name="Hayashi H."/>
            <person name="Hattori M."/>
            <person name="Hamada S."/>
        </authorList>
    </citation>
    <scope>NUCLEOTIDE SEQUENCE [LARGE SCALE GENOMIC DNA]</scope>
    <source>
        <strain>SSI-1</strain>
    </source>
</reference>
<name>Y1299_STRPQ</name>
<protein>
    <recommendedName>
        <fullName>Uncharacterized RNA methyltransferase SPs0562</fullName>
        <ecNumber>2.1.1.-</ecNumber>
    </recommendedName>
</protein>
<proteinExistence type="inferred from homology"/>
<sequence length="451" mass="50739">MVVKVKQKIPLKIKRMGINGEGIGFYQKTLVFVPGALKGENIFCQITAVKRNFAEAKLLTVNKASKNRVKPACSVYETCGGCQIMHLAYPKQLDFKDDVIRQALKKFKPTGYEQFEIRPTLGMKKPDHYRAKLQFQLRSFGGTVKAGLFSQGSHRLVPIDNCLVQDQLTQDIINKITQLVDKYKLPIYNERKIAGIRTIMVRKAQASDQVQIIVVSSKEVRLANFIGELTKAFPQVKTVALNSNRSKSSEIYGDETEILWGQEAIHEEVLDYGFALSPRAFYQLNPQQTEVLYGEVVKALDVGSKDHIIDAYCGVGSIGFAFAGKVKSVRGMDIIPEAIEDAQKNAKAMGFDNAYYEAGKAEDIIPKWYKQGYRADAIIVDPPRTGLDDKLLKTILHYQPKQMVYVSCNTSTLARDLVQLTKVYDVHYIQSVDMFPHTARTEAVVKLQKRV</sequence>
<keyword id="KW-0004">4Fe-4S</keyword>
<keyword id="KW-0408">Iron</keyword>
<keyword id="KW-0411">Iron-sulfur</keyword>
<keyword id="KW-0479">Metal-binding</keyword>
<keyword id="KW-0489">Methyltransferase</keyword>
<keyword id="KW-0949">S-adenosyl-L-methionine</keyword>
<keyword id="KW-0808">Transferase</keyword>
<accession>P0DG17</accession>
<accession>Q79XZ4</accession>
<accession>Q8K6K7</accession>